<protein>
    <recommendedName>
        <fullName evidence="1">2-succinylbenzoate--CoA ligase</fullName>
        <ecNumber evidence="1">6.2.1.26</ecNumber>
    </recommendedName>
    <alternativeName>
        <fullName evidence="1">o-succinylbenzoyl-CoA synthetase</fullName>
        <shortName evidence="1">OSB-CoA synthetase</shortName>
    </alternativeName>
</protein>
<comment type="function">
    <text evidence="1">Converts 2-succinylbenzoate (OSB) to 2-succinylbenzoyl-CoA (OSB-CoA).</text>
</comment>
<comment type="catalytic activity">
    <reaction evidence="1">
        <text>2-succinylbenzoate + ATP + CoA = 2-succinylbenzoyl-CoA + AMP + diphosphate</text>
        <dbReference type="Rhea" id="RHEA:17009"/>
        <dbReference type="ChEBI" id="CHEBI:18325"/>
        <dbReference type="ChEBI" id="CHEBI:30616"/>
        <dbReference type="ChEBI" id="CHEBI:33019"/>
        <dbReference type="ChEBI" id="CHEBI:57287"/>
        <dbReference type="ChEBI" id="CHEBI:57364"/>
        <dbReference type="ChEBI" id="CHEBI:456215"/>
        <dbReference type="EC" id="6.2.1.26"/>
    </reaction>
</comment>
<comment type="pathway">
    <text evidence="1">Quinol/quinone metabolism; 1,4-dihydroxy-2-naphthoate biosynthesis; 1,4-dihydroxy-2-naphthoate from chorismate: step 5/7.</text>
</comment>
<comment type="pathway">
    <text evidence="1">Quinol/quinone metabolism; menaquinone biosynthesis.</text>
</comment>
<comment type="similarity">
    <text evidence="1">Belongs to the ATP-dependent AMP-binding enzyme family. MenE subfamily.</text>
</comment>
<evidence type="ECO:0000255" key="1">
    <source>
        <dbReference type="HAMAP-Rule" id="MF_00731"/>
    </source>
</evidence>
<accession>Q816I1</accession>
<name>MENE_BACCR</name>
<reference key="1">
    <citation type="journal article" date="2003" name="Nature">
        <title>Genome sequence of Bacillus cereus and comparative analysis with Bacillus anthracis.</title>
        <authorList>
            <person name="Ivanova N."/>
            <person name="Sorokin A."/>
            <person name="Anderson I."/>
            <person name="Galleron N."/>
            <person name="Candelon B."/>
            <person name="Kapatral V."/>
            <person name="Bhattacharyya A."/>
            <person name="Reznik G."/>
            <person name="Mikhailova N."/>
            <person name="Lapidus A."/>
            <person name="Chu L."/>
            <person name="Mazur M."/>
            <person name="Goltsman E."/>
            <person name="Larsen N."/>
            <person name="D'Souza M."/>
            <person name="Walunas T."/>
            <person name="Grechkin Y."/>
            <person name="Pusch G."/>
            <person name="Haselkorn R."/>
            <person name="Fonstein M."/>
            <person name="Ehrlich S.D."/>
            <person name="Overbeek R."/>
            <person name="Kyrpides N.C."/>
        </authorList>
    </citation>
    <scope>NUCLEOTIDE SEQUENCE [LARGE SCALE GENOMIC DNA]</scope>
    <source>
        <strain>ATCC 14579 / DSM 31 / CCUG 7414 / JCM 2152 / NBRC 15305 / NCIMB 9373 / NCTC 2599 / NRRL B-3711</strain>
    </source>
</reference>
<feature type="chain" id="PRO_0000193156" description="2-succinylbenzoate--CoA ligase">
    <location>
        <begin position="1"/>
        <end position="482"/>
    </location>
</feature>
<sequence>MMETMPNWLMQRAFLTPDRTAIEIEEEKVTFMELHEKVVSVCEHLTHVGVERGQKVAVLMKNGMEMITVIHALSYVGAVAVLLNTRLSREELLWQMDDAEVVCLVTDQDFDAKDVPVYSLAEVMNGPKEEASIQEEFSLEEAMTIIYTSGTTGKPKGVILTYGNHWASAVGSSLNLGLRDDDCWLACMPMFHVGGLSLLMKNIMYGMRILLVPKYDADFIHKALQTRGVTIISVVSKMLTDLLERLGAETYPSSLRCMLLGGGPAPKPLLEACVEKGIPVYQTYGMTETSSQICTLSADYMLTKVGSAGKPLFQCQLRIEKDGVVVPPLVEGEIVVKGPNVTGGYFNREDATRETIQNGWLHTGDLGYLDEEGFLYVLDRRSDLIISGGENIYPAQIEEVLLSHPAVAEAGVVGMSDDKWGQVPAAFVVKSGAVTEEEILHFCEEKLAKYKVPKKACFLEELPRNASKKLLRRELRQLVEEM</sequence>
<proteinExistence type="inferred from homology"/>
<organism>
    <name type="scientific">Bacillus cereus (strain ATCC 14579 / DSM 31 / CCUG 7414 / JCM 2152 / NBRC 15305 / NCIMB 9373 / NCTC 2599 / NRRL B-3711)</name>
    <dbReference type="NCBI Taxonomy" id="226900"/>
    <lineage>
        <taxon>Bacteria</taxon>
        <taxon>Bacillati</taxon>
        <taxon>Bacillota</taxon>
        <taxon>Bacilli</taxon>
        <taxon>Bacillales</taxon>
        <taxon>Bacillaceae</taxon>
        <taxon>Bacillus</taxon>
        <taxon>Bacillus cereus group</taxon>
    </lineage>
</organism>
<dbReference type="EC" id="6.2.1.26" evidence="1"/>
<dbReference type="EMBL" id="AE016877">
    <property type="protein sequence ID" value="AAP11751.1"/>
    <property type="molecule type" value="Genomic_DNA"/>
</dbReference>
<dbReference type="RefSeq" id="NP_834550.1">
    <property type="nucleotide sequence ID" value="NC_004722.1"/>
</dbReference>
<dbReference type="SMR" id="Q816I1"/>
<dbReference type="STRING" id="226900.BC_4851"/>
<dbReference type="KEGG" id="bce:BC4851"/>
<dbReference type="PATRIC" id="fig|226900.8.peg.5022"/>
<dbReference type="HOGENOM" id="CLU_000022_59_0_9"/>
<dbReference type="UniPathway" id="UPA00079"/>
<dbReference type="UniPathway" id="UPA01057">
    <property type="reaction ID" value="UER00166"/>
</dbReference>
<dbReference type="Proteomes" id="UP000001417">
    <property type="component" value="Chromosome"/>
</dbReference>
<dbReference type="GO" id="GO:0005524">
    <property type="term" value="F:ATP binding"/>
    <property type="evidence" value="ECO:0007669"/>
    <property type="project" value="UniProtKB-KW"/>
</dbReference>
<dbReference type="GO" id="GO:0016405">
    <property type="term" value="F:CoA-ligase activity"/>
    <property type="evidence" value="ECO:0000318"/>
    <property type="project" value="GO_Central"/>
</dbReference>
<dbReference type="GO" id="GO:0008756">
    <property type="term" value="F:o-succinylbenzoate-CoA ligase activity"/>
    <property type="evidence" value="ECO:0007669"/>
    <property type="project" value="UniProtKB-UniRule"/>
</dbReference>
<dbReference type="GO" id="GO:0009234">
    <property type="term" value="P:menaquinone biosynthetic process"/>
    <property type="evidence" value="ECO:0007669"/>
    <property type="project" value="UniProtKB-UniRule"/>
</dbReference>
<dbReference type="CDD" id="cd05912">
    <property type="entry name" value="OSB_CoA_lg"/>
    <property type="match status" value="1"/>
</dbReference>
<dbReference type="FunFam" id="3.30.300.30:FF:000008">
    <property type="entry name" value="2,3-dihydroxybenzoate-AMP ligase"/>
    <property type="match status" value="1"/>
</dbReference>
<dbReference type="Gene3D" id="3.30.300.30">
    <property type="match status" value="1"/>
</dbReference>
<dbReference type="Gene3D" id="3.40.50.12780">
    <property type="entry name" value="N-terminal domain of ligase-like"/>
    <property type="match status" value="1"/>
</dbReference>
<dbReference type="HAMAP" id="MF_00731">
    <property type="entry name" value="MenE"/>
    <property type="match status" value="1"/>
</dbReference>
<dbReference type="InterPro" id="IPR025110">
    <property type="entry name" value="AMP-bd_C"/>
</dbReference>
<dbReference type="InterPro" id="IPR045851">
    <property type="entry name" value="AMP-bd_C_sf"/>
</dbReference>
<dbReference type="InterPro" id="IPR020845">
    <property type="entry name" value="AMP-binding_CS"/>
</dbReference>
<dbReference type="InterPro" id="IPR000873">
    <property type="entry name" value="AMP-dep_synth/lig_dom"/>
</dbReference>
<dbReference type="InterPro" id="IPR042099">
    <property type="entry name" value="ANL_N_sf"/>
</dbReference>
<dbReference type="InterPro" id="IPR050237">
    <property type="entry name" value="ATP-dep_AMP-bd_enzyme"/>
</dbReference>
<dbReference type="InterPro" id="IPR010192">
    <property type="entry name" value="MenE"/>
</dbReference>
<dbReference type="NCBIfam" id="TIGR01923">
    <property type="entry name" value="menE"/>
    <property type="match status" value="1"/>
</dbReference>
<dbReference type="NCBIfam" id="NF002966">
    <property type="entry name" value="PRK03640.1"/>
    <property type="match status" value="1"/>
</dbReference>
<dbReference type="PANTHER" id="PTHR43767">
    <property type="entry name" value="LONG-CHAIN-FATTY-ACID--COA LIGASE"/>
    <property type="match status" value="1"/>
</dbReference>
<dbReference type="PANTHER" id="PTHR43767:SF1">
    <property type="entry name" value="NONRIBOSOMAL PEPTIDE SYNTHASE PES1 (EUROFUNG)-RELATED"/>
    <property type="match status" value="1"/>
</dbReference>
<dbReference type="Pfam" id="PF00501">
    <property type="entry name" value="AMP-binding"/>
    <property type="match status" value="1"/>
</dbReference>
<dbReference type="Pfam" id="PF13193">
    <property type="entry name" value="AMP-binding_C"/>
    <property type="match status" value="1"/>
</dbReference>
<dbReference type="SUPFAM" id="SSF56801">
    <property type="entry name" value="Acetyl-CoA synthetase-like"/>
    <property type="match status" value="1"/>
</dbReference>
<dbReference type="PROSITE" id="PS00455">
    <property type="entry name" value="AMP_BINDING"/>
    <property type="match status" value="1"/>
</dbReference>
<gene>
    <name evidence="1" type="primary">menE</name>
    <name type="ordered locus">BC_4851</name>
</gene>
<keyword id="KW-0067">ATP-binding</keyword>
<keyword id="KW-0436">Ligase</keyword>
<keyword id="KW-0474">Menaquinone biosynthesis</keyword>
<keyword id="KW-0547">Nucleotide-binding</keyword>
<keyword id="KW-1185">Reference proteome</keyword>